<evidence type="ECO:0000255" key="1">
    <source>
        <dbReference type="HAMAP-Rule" id="MF_00076"/>
    </source>
</evidence>
<name>HIS7_METRJ</name>
<keyword id="KW-0028">Amino-acid biosynthesis</keyword>
<keyword id="KW-0963">Cytoplasm</keyword>
<keyword id="KW-0368">Histidine biosynthesis</keyword>
<keyword id="KW-0456">Lyase</keyword>
<feature type="chain" id="PRO_1000092702" description="Imidazoleglycerol-phosphate dehydratase">
    <location>
        <begin position="1"/>
        <end position="195"/>
    </location>
</feature>
<reference key="1">
    <citation type="submission" date="2008-03" db="EMBL/GenBank/DDBJ databases">
        <title>Complete sequence of chromosome of Methylobacterium radiotolerans JCM 2831.</title>
        <authorList>
            <consortium name="US DOE Joint Genome Institute"/>
            <person name="Copeland A."/>
            <person name="Lucas S."/>
            <person name="Lapidus A."/>
            <person name="Glavina del Rio T."/>
            <person name="Dalin E."/>
            <person name="Tice H."/>
            <person name="Bruce D."/>
            <person name="Goodwin L."/>
            <person name="Pitluck S."/>
            <person name="Kiss H."/>
            <person name="Brettin T."/>
            <person name="Detter J.C."/>
            <person name="Han C."/>
            <person name="Kuske C.R."/>
            <person name="Schmutz J."/>
            <person name="Larimer F."/>
            <person name="Land M."/>
            <person name="Hauser L."/>
            <person name="Kyrpides N."/>
            <person name="Mikhailova N."/>
            <person name="Marx C.J."/>
            <person name="Richardson P."/>
        </authorList>
    </citation>
    <scope>NUCLEOTIDE SEQUENCE [LARGE SCALE GENOMIC DNA]</scope>
    <source>
        <strain>ATCC 27329 / DSM 1819 / JCM 2831 / NBRC 15690 / NCIMB 10815 / 0-1</strain>
    </source>
</reference>
<dbReference type="EC" id="4.2.1.19" evidence="1"/>
<dbReference type="EMBL" id="CP001001">
    <property type="protein sequence ID" value="ACB22478.1"/>
    <property type="molecule type" value="Genomic_DNA"/>
</dbReference>
<dbReference type="RefSeq" id="WP_012317474.1">
    <property type="nucleotide sequence ID" value="NC_010505.1"/>
</dbReference>
<dbReference type="SMR" id="B1LU98"/>
<dbReference type="STRING" id="426355.Mrad2831_0467"/>
<dbReference type="GeneID" id="6136480"/>
<dbReference type="KEGG" id="mrd:Mrad2831_0467"/>
<dbReference type="eggNOG" id="COG0131">
    <property type="taxonomic scope" value="Bacteria"/>
</dbReference>
<dbReference type="HOGENOM" id="CLU_044308_2_0_5"/>
<dbReference type="OrthoDB" id="9813612at2"/>
<dbReference type="UniPathway" id="UPA00031">
    <property type="reaction ID" value="UER00011"/>
</dbReference>
<dbReference type="Proteomes" id="UP000006589">
    <property type="component" value="Chromosome"/>
</dbReference>
<dbReference type="GO" id="GO:0005737">
    <property type="term" value="C:cytoplasm"/>
    <property type="evidence" value="ECO:0007669"/>
    <property type="project" value="UniProtKB-SubCell"/>
</dbReference>
<dbReference type="GO" id="GO:0004424">
    <property type="term" value="F:imidazoleglycerol-phosphate dehydratase activity"/>
    <property type="evidence" value="ECO:0007669"/>
    <property type="project" value="UniProtKB-UniRule"/>
</dbReference>
<dbReference type="GO" id="GO:0000105">
    <property type="term" value="P:L-histidine biosynthetic process"/>
    <property type="evidence" value="ECO:0007669"/>
    <property type="project" value="UniProtKB-UniRule"/>
</dbReference>
<dbReference type="CDD" id="cd07914">
    <property type="entry name" value="IGPD"/>
    <property type="match status" value="1"/>
</dbReference>
<dbReference type="FunFam" id="3.30.230.40:FF:000001">
    <property type="entry name" value="Imidazoleglycerol-phosphate dehydratase HisB"/>
    <property type="match status" value="1"/>
</dbReference>
<dbReference type="FunFam" id="3.30.230.40:FF:000003">
    <property type="entry name" value="Imidazoleglycerol-phosphate dehydratase HisB"/>
    <property type="match status" value="1"/>
</dbReference>
<dbReference type="Gene3D" id="3.30.230.40">
    <property type="entry name" value="Imidazole glycerol phosphate dehydratase, domain 1"/>
    <property type="match status" value="2"/>
</dbReference>
<dbReference type="HAMAP" id="MF_00076">
    <property type="entry name" value="HisB"/>
    <property type="match status" value="1"/>
</dbReference>
<dbReference type="InterPro" id="IPR038494">
    <property type="entry name" value="IGPD_sf"/>
</dbReference>
<dbReference type="InterPro" id="IPR000807">
    <property type="entry name" value="ImidazoleglycerolP_deHydtase"/>
</dbReference>
<dbReference type="InterPro" id="IPR020565">
    <property type="entry name" value="ImidazoleglycerP_deHydtase_CS"/>
</dbReference>
<dbReference type="InterPro" id="IPR020568">
    <property type="entry name" value="Ribosomal_Su5_D2-typ_SF"/>
</dbReference>
<dbReference type="NCBIfam" id="NF002109">
    <property type="entry name" value="PRK00951.1-5"/>
    <property type="match status" value="1"/>
</dbReference>
<dbReference type="NCBIfam" id="NF002111">
    <property type="entry name" value="PRK00951.2-1"/>
    <property type="match status" value="1"/>
</dbReference>
<dbReference type="NCBIfam" id="NF002114">
    <property type="entry name" value="PRK00951.2-4"/>
    <property type="match status" value="1"/>
</dbReference>
<dbReference type="NCBIfam" id="NF002116">
    <property type="entry name" value="PRK00951.2-6"/>
    <property type="match status" value="1"/>
</dbReference>
<dbReference type="PANTHER" id="PTHR23133:SF2">
    <property type="entry name" value="IMIDAZOLEGLYCEROL-PHOSPHATE DEHYDRATASE"/>
    <property type="match status" value="1"/>
</dbReference>
<dbReference type="PANTHER" id="PTHR23133">
    <property type="entry name" value="IMIDAZOLEGLYCEROL-PHOSPHATE DEHYDRATASE HIS7"/>
    <property type="match status" value="1"/>
</dbReference>
<dbReference type="Pfam" id="PF00475">
    <property type="entry name" value="IGPD"/>
    <property type="match status" value="1"/>
</dbReference>
<dbReference type="SUPFAM" id="SSF54211">
    <property type="entry name" value="Ribosomal protein S5 domain 2-like"/>
    <property type="match status" value="2"/>
</dbReference>
<dbReference type="PROSITE" id="PS00954">
    <property type="entry name" value="IGP_DEHYDRATASE_1"/>
    <property type="match status" value="1"/>
</dbReference>
<dbReference type="PROSITE" id="PS00955">
    <property type="entry name" value="IGP_DEHYDRATASE_2"/>
    <property type="match status" value="1"/>
</dbReference>
<proteinExistence type="inferred from homology"/>
<sequence length="195" mass="21390">MRSASISRKTAETDIAVSVNLDGTGRSNIATGIGFLDHMLDLLARHALFDLDVKVDGDLHIDQHHSAEDCGIALGQAFAKALGDKRGVTRYADIHLPMDEALTRVCVDISGRPFLVFRTTFRVEKIGTFDTELVREWFQAFAMNAGLTLHVETLYGDNAHHIAESCYKGLARALRKAVAIDPREEGRVPSTKGSL</sequence>
<protein>
    <recommendedName>
        <fullName evidence="1">Imidazoleglycerol-phosphate dehydratase</fullName>
        <shortName evidence="1">IGPD</shortName>
        <ecNumber evidence="1">4.2.1.19</ecNumber>
    </recommendedName>
</protein>
<organism>
    <name type="scientific">Methylobacterium radiotolerans (strain ATCC 27329 / DSM 1819 / JCM 2831 / NBRC 15690 / NCIMB 10815 / 0-1)</name>
    <dbReference type="NCBI Taxonomy" id="426355"/>
    <lineage>
        <taxon>Bacteria</taxon>
        <taxon>Pseudomonadati</taxon>
        <taxon>Pseudomonadota</taxon>
        <taxon>Alphaproteobacteria</taxon>
        <taxon>Hyphomicrobiales</taxon>
        <taxon>Methylobacteriaceae</taxon>
        <taxon>Methylobacterium</taxon>
    </lineage>
</organism>
<gene>
    <name evidence="1" type="primary">hisB</name>
    <name type="ordered locus">Mrad2831_0467</name>
</gene>
<accession>B1LU98</accession>
<comment type="catalytic activity">
    <reaction evidence="1">
        <text>D-erythro-1-(imidazol-4-yl)glycerol 3-phosphate = 3-(imidazol-4-yl)-2-oxopropyl phosphate + H2O</text>
        <dbReference type="Rhea" id="RHEA:11040"/>
        <dbReference type="ChEBI" id="CHEBI:15377"/>
        <dbReference type="ChEBI" id="CHEBI:57766"/>
        <dbReference type="ChEBI" id="CHEBI:58278"/>
        <dbReference type="EC" id="4.2.1.19"/>
    </reaction>
</comment>
<comment type="pathway">
    <text evidence="1">Amino-acid biosynthesis; L-histidine biosynthesis; L-histidine from 5-phospho-alpha-D-ribose 1-diphosphate: step 6/9.</text>
</comment>
<comment type="subcellular location">
    <subcellularLocation>
        <location evidence="1">Cytoplasm</location>
    </subcellularLocation>
</comment>
<comment type="similarity">
    <text evidence="1">Belongs to the imidazoleglycerol-phosphate dehydratase family.</text>
</comment>